<organism>
    <name type="scientific">Chlamydia caviae (strain ATCC VR-813 / DSM 19441 / 03DC25 / GPIC)</name>
    <name type="common">Chlamydophila caviae</name>
    <dbReference type="NCBI Taxonomy" id="227941"/>
    <lineage>
        <taxon>Bacteria</taxon>
        <taxon>Pseudomonadati</taxon>
        <taxon>Chlamydiota</taxon>
        <taxon>Chlamydiia</taxon>
        <taxon>Chlamydiales</taxon>
        <taxon>Chlamydiaceae</taxon>
        <taxon>Chlamydia/Chlamydophila group</taxon>
        <taxon>Chlamydia</taxon>
    </lineage>
</organism>
<comment type="function">
    <text evidence="2">Catalyzes the formation of N(7)-methylguanine at position 46 (m7G46) in tRNA.</text>
</comment>
<comment type="catalytic activity">
    <reaction evidence="2">
        <text>guanosine(46) in tRNA + S-adenosyl-L-methionine = N(7)-methylguanosine(46) in tRNA + S-adenosyl-L-homocysteine</text>
        <dbReference type="Rhea" id="RHEA:42708"/>
        <dbReference type="Rhea" id="RHEA-COMP:10188"/>
        <dbReference type="Rhea" id="RHEA-COMP:10189"/>
        <dbReference type="ChEBI" id="CHEBI:57856"/>
        <dbReference type="ChEBI" id="CHEBI:59789"/>
        <dbReference type="ChEBI" id="CHEBI:74269"/>
        <dbReference type="ChEBI" id="CHEBI:74480"/>
        <dbReference type="EC" id="2.1.1.33"/>
    </reaction>
</comment>
<comment type="pathway">
    <text evidence="2">tRNA modification; N(7)-methylguanine-tRNA biosynthesis.</text>
</comment>
<comment type="similarity">
    <text evidence="2">Belongs to the class I-like SAM-binding methyltransferase superfamily. TrmB family.</text>
</comment>
<protein>
    <recommendedName>
        <fullName evidence="2">tRNA (guanine-N(7)-)-methyltransferase</fullName>
        <ecNumber evidence="2">2.1.1.33</ecNumber>
    </recommendedName>
    <alternativeName>
        <fullName evidence="2">tRNA (guanine(46)-N(7))-methyltransferase</fullName>
    </alternativeName>
    <alternativeName>
        <fullName evidence="2">tRNA(m7G46)-methyltransferase</fullName>
    </alternativeName>
</protein>
<proteinExistence type="inferred from homology"/>
<accession>P59718</accession>
<evidence type="ECO:0000250" key="1"/>
<evidence type="ECO:0000255" key="2">
    <source>
        <dbReference type="HAMAP-Rule" id="MF_01057"/>
    </source>
</evidence>
<name>TRMB_CHLCV</name>
<keyword id="KW-0489">Methyltransferase</keyword>
<keyword id="KW-0949">S-adenosyl-L-methionine</keyword>
<keyword id="KW-0808">Transferase</keyword>
<keyword id="KW-0819">tRNA processing</keyword>
<sequence>MKPQNLKVPFFWEERSTEIKDNVLYIPNHYFKHDQFIMPSWEEFFGNNNPISCELCSGNGDWVVSQAQNMPQMNWIAVEKRFDRVRKIWSKMHNFQVSNLRIVCGEAQTFFRHYLKNEILQRIVVNFPDPWPKSRHRKHRLFQDEFMNDVVRVLVESGILVLATDDKNYLVEAIKMMRQCLLPTIEDPYYCKVLDNYGDSWFERLWRSKGQEIFYTEFVKKVGI</sequence>
<dbReference type="EC" id="2.1.1.33" evidence="2"/>
<dbReference type="EMBL" id="AE015925">
    <property type="protein sequence ID" value="AAP05516.1"/>
    <property type="molecule type" value="Genomic_DNA"/>
</dbReference>
<dbReference type="RefSeq" id="WP_011006730.1">
    <property type="nucleotide sequence ID" value="NC_003361.3"/>
</dbReference>
<dbReference type="SMR" id="P59718"/>
<dbReference type="STRING" id="227941.CCA_00775"/>
<dbReference type="KEGG" id="cca:CCA_00775"/>
<dbReference type="eggNOG" id="COG0220">
    <property type="taxonomic scope" value="Bacteria"/>
</dbReference>
<dbReference type="HOGENOM" id="CLU_050910_2_0_0"/>
<dbReference type="OrthoDB" id="9802090at2"/>
<dbReference type="UniPathway" id="UPA00989"/>
<dbReference type="Proteomes" id="UP000002193">
    <property type="component" value="Chromosome"/>
</dbReference>
<dbReference type="GO" id="GO:0043527">
    <property type="term" value="C:tRNA methyltransferase complex"/>
    <property type="evidence" value="ECO:0007669"/>
    <property type="project" value="TreeGrafter"/>
</dbReference>
<dbReference type="GO" id="GO:0008176">
    <property type="term" value="F:tRNA (guanine(46)-N7)-methyltransferase activity"/>
    <property type="evidence" value="ECO:0007669"/>
    <property type="project" value="UniProtKB-UniRule"/>
</dbReference>
<dbReference type="Gene3D" id="3.40.50.150">
    <property type="entry name" value="Vaccinia Virus protein VP39"/>
    <property type="match status" value="1"/>
</dbReference>
<dbReference type="HAMAP" id="MF_01057">
    <property type="entry name" value="tRNA_methyltr_TrmB"/>
    <property type="match status" value="1"/>
</dbReference>
<dbReference type="InterPro" id="IPR029063">
    <property type="entry name" value="SAM-dependent_MTases_sf"/>
</dbReference>
<dbReference type="InterPro" id="IPR003358">
    <property type="entry name" value="tRNA_(Gua-N-7)_MeTrfase_Trmb"/>
</dbReference>
<dbReference type="InterPro" id="IPR055361">
    <property type="entry name" value="tRNA_methyltr_TrmB_bact"/>
</dbReference>
<dbReference type="NCBIfam" id="TIGR00091">
    <property type="entry name" value="tRNA (guanosine(46)-N7)-methyltransferase TrmB"/>
    <property type="match status" value="1"/>
</dbReference>
<dbReference type="PANTHER" id="PTHR23417">
    <property type="entry name" value="3-DEOXY-D-MANNO-OCTULOSONIC-ACID TRANSFERASE/TRNA GUANINE-N 7 - -METHYLTRANSFERASE"/>
    <property type="match status" value="1"/>
</dbReference>
<dbReference type="PANTHER" id="PTHR23417:SF14">
    <property type="entry name" value="PENTACOTRIPEPTIDE-REPEAT REGION OF PRORP DOMAIN-CONTAINING PROTEIN"/>
    <property type="match status" value="1"/>
</dbReference>
<dbReference type="Pfam" id="PF02390">
    <property type="entry name" value="Methyltransf_4"/>
    <property type="match status" value="1"/>
</dbReference>
<dbReference type="SUPFAM" id="SSF53335">
    <property type="entry name" value="S-adenosyl-L-methionine-dependent methyltransferases"/>
    <property type="match status" value="1"/>
</dbReference>
<dbReference type="PROSITE" id="PS51625">
    <property type="entry name" value="SAM_MT_TRMB"/>
    <property type="match status" value="1"/>
</dbReference>
<gene>
    <name evidence="2" type="primary">trmB</name>
    <name type="ordered locus">CCA_00775</name>
</gene>
<feature type="chain" id="PRO_0000171314" description="tRNA (guanine-N(7)-)-methyltransferase">
    <location>
        <begin position="1"/>
        <end position="224"/>
    </location>
</feature>
<feature type="active site" evidence="1">
    <location>
        <position position="129"/>
    </location>
</feature>
<feature type="binding site" evidence="2">
    <location>
        <position position="54"/>
    </location>
    <ligand>
        <name>S-adenosyl-L-methionine</name>
        <dbReference type="ChEBI" id="CHEBI:59789"/>
    </ligand>
</feature>
<feature type="binding site" evidence="2">
    <location>
        <position position="79"/>
    </location>
    <ligand>
        <name>S-adenosyl-L-methionine</name>
        <dbReference type="ChEBI" id="CHEBI:59789"/>
    </ligand>
</feature>
<feature type="binding site" evidence="2">
    <location>
        <position position="106"/>
    </location>
    <ligand>
        <name>S-adenosyl-L-methionine</name>
        <dbReference type="ChEBI" id="CHEBI:59789"/>
    </ligand>
</feature>
<feature type="binding site" evidence="2">
    <location>
        <position position="129"/>
    </location>
    <ligand>
        <name>S-adenosyl-L-methionine</name>
        <dbReference type="ChEBI" id="CHEBI:59789"/>
    </ligand>
</feature>
<feature type="binding site" evidence="2">
    <location>
        <position position="133"/>
    </location>
    <ligand>
        <name>substrate</name>
    </ligand>
</feature>
<feature type="binding site" evidence="2">
    <location>
        <position position="165"/>
    </location>
    <ligand>
        <name>substrate</name>
    </ligand>
</feature>
<reference key="1">
    <citation type="journal article" date="2003" name="Nucleic Acids Res.">
        <title>Genome sequence of Chlamydophila caviae (Chlamydia psittaci GPIC): examining the role of niche-specific genes in the evolution of the Chlamydiaceae.</title>
        <authorList>
            <person name="Read T.D."/>
            <person name="Myers G.S.A."/>
            <person name="Brunham R.C."/>
            <person name="Nelson W.C."/>
            <person name="Paulsen I.T."/>
            <person name="Heidelberg J.F."/>
            <person name="Holtzapple E.K."/>
            <person name="Khouri H.M."/>
            <person name="Federova N.B."/>
            <person name="Carty H.A."/>
            <person name="Umayam L.A."/>
            <person name="Haft D.H."/>
            <person name="Peterson J.D."/>
            <person name="Beanan M.J."/>
            <person name="White O."/>
            <person name="Salzberg S.L."/>
            <person name="Hsia R.-C."/>
            <person name="McClarty G."/>
            <person name="Rank R.G."/>
            <person name="Bavoil P.M."/>
            <person name="Fraser C.M."/>
        </authorList>
    </citation>
    <scope>NUCLEOTIDE SEQUENCE [LARGE SCALE GENOMIC DNA]</scope>
    <source>
        <strain>ATCC VR-813 / DSM 19441 / 03DC25 / GPIC</strain>
    </source>
</reference>